<accession>B7GXS7</accession>
<name>LON_ACIB3</name>
<reference key="1">
    <citation type="journal article" date="2008" name="J. Bacteriol.">
        <title>Comparative genome sequence analysis of multidrug-resistant Acinetobacter baumannii.</title>
        <authorList>
            <person name="Adams M.D."/>
            <person name="Goglin K."/>
            <person name="Molyneaux N."/>
            <person name="Hujer K.M."/>
            <person name="Lavender H."/>
            <person name="Jamison J.J."/>
            <person name="MacDonald I.J."/>
            <person name="Martin K.M."/>
            <person name="Russo T."/>
            <person name="Campagnari A.A."/>
            <person name="Hujer A.M."/>
            <person name="Bonomo R.A."/>
            <person name="Gill S.R."/>
        </authorList>
    </citation>
    <scope>NUCLEOTIDE SEQUENCE [LARGE SCALE GENOMIC DNA]</scope>
    <source>
        <strain>AB307-0294</strain>
    </source>
</reference>
<organism>
    <name type="scientific">Acinetobacter baumannii (strain AB307-0294)</name>
    <dbReference type="NCBI Taxonomy" id="557600"/>
    <lineage>
        <taxon>Bacteria</taxon>
        <taxon>Pseudomonadati</taxon>
        <taxon>Pseudomonadota</taxon>
        <taxon>Gammaproteobacteria</taxon>
        <taxon>Moraxellales</taxon>
        <taxon>Moraxellaceae</taxon>
        <taxon>Acinetobacter</taxon>
        <taxon>Acinetobacter calcoaceticus/baumannii complex</taxon>
    </lineage>
</organism>
<protein>
    <recommendedName>
        <fullName evidence="1">Lon protease</fullName>
        <ecNumber evidence="1">3.4.21.53</ecNumber>
    </recommendedName>
    <alternativeName>
        <fullName evidence="1">ATP-dependent protease La</fullName>
    </alternativeName>
</protein>
<dbReference type="EC" id="3.4.21.53" evidence="1"/>
<dbReference type="EMBL" id="CP001172">
    <property type="protein sequence ID" value="ACJ57053.1"/>
    <property type="molecule type" value="Genomic_DNA"/>
</dbReference>
<dbReference type="RefSeq" id="WP_001292274.1">
    <property type="nucleotide sequence ID" value="NZ_CP001172.1"/>
</dbReference>
<dbReference type="SMR" id="B7GXS7"/>
<dbReference type="MEROPS" id="S16.001"/>
<dbReference type="GeneID" id="92892994"/>
<dbReference type="HOGENOM" id="CLU_004109_4_3_6"/>
<dbReference type="Proteomes" id="UP000006924">
    <property type="component" value="Chromosome"/>
</dbReference>
<dbReference type="GO" id="GO:0005737">
    <property type="term" value="C:cytoplasm"/>
    <property type="evidence" value="ECO:0007669"/>
    <property type="project" value="UniProtKB-SubCell"/>
</dbReference>
<dbReference type="GO" id="GO:0005524">
    <property type="term" value="F:ATP binding"/>
    <property type="evidence" value="ECO:0007669"/>
    <property type="project" value="UniProtKB-UniRule"/>
</dbReference>
<dbReference type="GO" id="GO:0016887">
    <property type="term" value="F:ATP hydrolysis activity"/>
    <property type="evidence" value="ECO:0007669"/>
    <property type="project" value="UniProtKB-UniRule"/>
</dbReference>
<dbReference type="GO" id="GO:0004176">
    <property type="term" value="F:ATP-dependent peptidase activity"/>
    <property type="evidence" value="ECO:0007669"/>
    <property type="project" value="UniProtKB-UniRule"/>
</dbReference>
<dbReference type="GO" id="GO:0043565">
    <property type="term" value="F:sequence-specific DNA binding"/>
    <property type="evidence" value="ECO:0007669"/>
    <property type="project" value="UniProtKB-UniRule"/>
</dbReference>
<dbReference type="GO" id="GO:0004252">
    <property type="term" value="F:serine-type endopeptidase activity"/>
    <property type="evidence" value="ECO:0007669"/>
    <property type="project" value="UniProtKB-UniRule"/>
</dbReference>
<dbReference type="GO" id="GO:0034605">
    <property type="term" value="P:cellular response to heat"/>
    <property type="evidence" value="ECO:0007669"/>
    <property type="project" value="UniProtKB-UniRule"/>
</dbReference>
<dbReference type="GO" id="GO:0006515">
    <property type="term" value="P:protein quality control for misfolded or incompletely synthesized proteins"/>
    <property type="evidence" value="ECO:0007669"/>
    <property type="project" value="UniProtKB-UniRule"/>
</dbReference>
<dbReference type="CDD" id="cd19500">
    <property type="entry name" value="RecA-like_Lon"/>
    <property type="match status" value="1"/>
</dbReference>
<dbReference type="FunFam" id="1.20.5.5270:FF:000002">
    <property type="entry name" value="Lon protease homolog"/>
    <property type="match status" value="1"/>
</dbReference>
<dbReference type="FunFam" id="3.40.50.300:FF:000021">
    <property type="entry name" value="Lon protease homolog"/>
    <property type="match status" value="1"/>
</dbReference>
<dbReference type="Gene3D" id="1.10.8.60">
    <property type="match status" value="1"/>
</dbReference>
<dbReference type="Gene3D" id="1.20.5.5270">
    <property type="match status" value="1"/>
</dbReference>
<dbReference type="Gene3D" id="1.20.58.1480">
    <property type="match status" value="1"/>
</dbReference>
<dbReference type="Gene3D" id="3.30.230.10">
    <property type="match status" value="1"/>
</dbReference>
<dbReference type="Gene3D" id="2.30.130.40">
    <property type="entry name" value="LON domain-like"/>
    <property type="match status" value="1"/>
</dbReference>
<dbReference type="Gene3D" id="3.40.50.300">
    <property type="entry name" value="P-loop containing nucleotide triphosphate hydrolases"/>
    <property type="match status" value="1"/>
</dbReference>
<dbReference type="HAMAP" id="MF_01973">
    <property type="entry name" value="lon_bact"/>
    <property type="match status" value="1"/>
</dbReference>
<dbReference type="InterPro" id="IPR003593">
    <property type="entry name" value="AAA+_ATPase"/>
</dbReference>
<dbReference type="InterPro" id="IPR003959">
    <property type="entry name" value="ATPase_AAA_core"/>
</dbReference>
<dbReference type="InterPro" id="IPR027543">
    <property type="entry name" value="Lon_bac"/>
</dbReference>
<dbReference type="InterPro" id="IPR004815">
    <property type="entry name" value="Lon_bac/euk-typ"/>
</dbReference>
<dbReference type="InterPro" id="IPR054594">
    <property type="entry name" value="Lon_lid"/>
</dbReference>
<dbReference type="InterPro" id="IPR008269">
    <property type="entry name" value="Lon_proteolytic"/>
</dbReference>
<dbReference type="InterPro" id="IPR027065">
    <property type="entry name" value="Lon_Prtase"/>
</dbReference>
<dbReference type="InterPro" id="IPR003111">
    <property type="entry name" value="Lon_prtase_N"/>
</dbReference>
<dbReference type="InterPro" id="IPR046336">
    <property type="entry name" value="Lon_prtase_N_sf"/>
</dbReference>
<dbReference type="InterPro" id="IPR027417">
    <property type="entry name" value="P-loop_NTPase"/>
</dbReference>
<dbReference type="InterPro" id="IPR008268">
    <property type="entry name" value="Peptidase_S16_AS"/>
</dbReference>
<dbReference type="InterPro" id="IPR015947">
    <property type="entry name" value="PUA-like_sf"/>
</dbReference>
<dbReference type="InterPro" id="IPR020568">
    <property type="entry name" value="Ribosomal_Su5_D2-typ_SF"/>
</dbReference>
<dbReference type="InterPro" id="IPR014721">
    <property type="entry name" value="Ribsml_uS5_D2-typ_fold_subgr"/>
</dbReference>
<dbReference type="NCBIfam" id="TIGR00763">
    <property type="entry name" value="lon"/>
    <property type="match status" value="1"/>
</dbReference>
<dbReference type="NCBIfam" id="NF008053">
    <property type="entry name" value="PRK10787.1"/>
    <property type="match status" value="1"/>
</dbReference>
<dbReference type="PANTHER" id="PTHR10046">
    <property type="entry name" value="ATP DEPENDENT LON PROTEASE FAMILY MEMBER"/>
    <property type="match status" value="1"/>
</dbReference>
<dbReference type="Pfam" id="PF00004">
    <property type="entry name" value="AAA"/>
    <property type="match status" value="1"/>
</dbReference>
<dbReference type="Pfam" id="PF05362">
    <property type="entry name" value="Lon_C"/>
    <property type="match status" value="1"/>
</dbReference>
<dbReference type="Pfam" id="PF22667">
    <property type="entry name" value="Lon_lid"/>
    <property type="match status" value="1"/>
</dbReference>
<dbReference type="Pfam" id="PF02190">
    <property type="entry name" value="LON_substr_bdg"/>
    <property type="match status" value="1"/>
</dbReference>
<dbReference type="PIRSF" id="PIRSF001174">
    <property type="entry name" value="Lon_proteas"/>
    <property type="match status" value="1"/>
</dbReference>
<dbReference type="PRINTS" id="PR00830">
    <property type="entry name" value="ENDOLAPTASE"/>
</dbReference>
<dbReference type="SMART" id="SM00382">
    <property type="entry name" value="AAA"/>
    <property type="match status" value="1"/>
</dbReference>
<dbReference type="SMART" id="SM00464">
    <property type="entry name" value="LON"/>
    <property type="match status" value="1"/>
</dbReference>
<dbReference type="SUPFAM" id="SSF52540">
    <property type="entry name" value="P-loop containing nucleoside triphosphate hydrolases"/>
    <property type="match status" value="1"/>
</dbReference>
<dbReference type="SUPFAM" id="SSF88697">
    <property type="entry name" value="PUA domain-like"/>
    <property type="match status" value="1"/>
</dbReference>
<dbReference type="SUPFAM" id="SSF54211">
    <property type="entry name" value="Ribosomal protein S5 domain 2-like"/>
    <property type="match status" value="1"/>
</dbReference>
<dbReference type="PROSITE" id="PS51787">
    <property type="entry name" value="LON_N"/>
    <property type="match status" value="1"/>
</dbReference>
<dbReference type="PROSITE" id="PS51786">
    <property type="entry name" value="LON_PROTEOLYTIC"/>
    <property type="match status" value="1"/>
</dbReference>
<dbReference type="PROSITE" id="PS01046">
    <property type="entry name" value="LON_SER"/>
    <property type="match status" value="1"/>
</dbReference>
<feature type="chain" id="PRO_0000396531" description="Lon protease">
    <location>
        <begin position="1"/>
        <end position="809"/>
    </location>
</feature>
<feature type="domain" description="Lon N-terminal" evidence="3">
    <location>
        <begin position="20"/>
        <end position="216"/>
    </location>
</feature>
<feature type="domain" description="Lon proteolytic" evidence="2">
    <location>
        <begin position="606"/>
        <end position="787"/>
    </location>
</feature>
<feature type="active site" evidence="1">
    <location>
        <position position="693"/>
    </location>
</feature>
<feature type="active site" evidence="1">
    <location>
        <position position="736"/>
    </location>
</feature>
<feature type="binding site" evidence="1">
    <location>
        <begin position="369"/>
        <end position="376"/>
    </location>
    <ligand>
        <name>ATP</name>
        <dbReference type="ChEBI" id="CHEBI:30616"/>
    </ligand>
</feature>
<gene>
    <name evidence="1" type="primary">lon</name>
    <name type="ordered locus">ABBFA_002579</name>
</gene>
<evidence type="ECO:0000255" key="1">
    <source>
        <dbReference type="HAMAP-Rule" id="MF_01973"/>
    </source>
</evidence>
<evidence type="ECO:0000255" key="2">
    <source>
        <dbReference type="PROSITE-ProRule" id="PRU01122"/>
    </source>
</evidence>
<evidence type="ECO:0000255" key="3">
    <source>
        <dbReference type="PROSITE-ProRule" id="PRU01123"/>
    </source>
</evidence>
<proteinExistence type="inferred from homology"/>
<keyword id="KW-0067">ATP-binding</keyword>
<keyword id="KW-0963">Cytoplasm</keyword>
<keyword id="KW-0378">Hydrolase</keyword>
<keyword id="KW-0547">Nucleotide-binding</keyword>
<keyword id="KW-0645">Protease</keyword>
<keyword id="KW-0720">Serine protease</keyword>
<keyword id="KW-0346">Stress response</keyword>
<comment type="function">
    <text evidence="1">ATP-dependent serine protease that mediates the selective degradation of mutant and abnormal proteins as well as certain short-lived regulatory proteins. Required for cellular homeostasis and for survival from DNA damage and developmental changes induced by stress. Degrades polypeptides processively to yield small peptide fragments that are 5 to 10 amino acids long. Binds to DNA in a double-stranded, site-specific manner.</text>
</comment>
<comment type="catalytic activity">
    <reaction evidence="1">
        <text>Hydrolysis of proteins in presence of ATP.</text>
        <dbReference type="EC" id="3.4.21.53"/>
    </reaction>
</comment>
<comment type="subunit">
    <text evidence="1">Homohexamer. Organized in a ring with a central cavity.</text>
</comment>
<comment type="subcellular location">
    <subcellularLocation>
        <location evidence="1">Cytoplasm</location>
    </subcellularLocation>
</comment>
<comment type="induction">
    <text evidence="1">By heat shock.</text>
</comment>
<comment type="similarity">
    <text evidence="1">Belongs to the peptidase S16 family.</text>
</comment>
<sequence length="809" mass="90128">MSELIMNEKTDLEPQVPSVLPLLALRDVVVYPHMQIALFVGREKSINAVDVARNSDNLVFVVAQKDSLTEEIDHDNLYQYGTVAKIVQVVNHENDENCIKVLIEGLHRSKLKKIIDEDSYLTAEHELSPMTINVDKATQETRLQELRNLFAQYAEAKLRNARELVAAANKIEDLLQLMFFVATRVPLNIEIKQKFLEYDEFEAHLQELMNYLMNQSAEQQIEQTLHDSVKRQMEKNQREYFLNEKMKVIQRELSDMNGGAEDDVAEIEKRLAEADLPEHVRKKAEAEFRKLKAMQPASSEAAVVRNYLEVILDTPWNKASKVSINLNKAQEILDADHYGLDDVKDRIVEYLAVQSRVKKLKGPILCLVGPPGVGKTSLGESVAKATGREFVRMALGGVRDEAEIRGHRRTYIGAMPGKIVQSLTKVGVKNPLFLLDEIDKMAQDYRGDPASALLEVLDPSQNSKFNDHYLDLDLDLSEVMFICTANSMNIPEALLDRMEVIRLPGYTEDEKVNIAERYLVPKAIKNNGLRPKELTIHEEAIRDIVQRYTREAGVRNLEREVSKIARKVVKEAVSKKSKNLQLDVTSANLPEYLGPHKFDFGMAEDEAQVGRVNGLAWTSVGGELLTIEVAAVKGKGKFITTGSLGDVMKESITTAMTVVRTRADELGIEASRFEETDVHVHLPEGATPKDGPSAGLALTTALVSAFTGIAIRPDIAMTGETSLGGRAMRIGGLKEKLLAAHRGGIKLVFIPQDNVRDLAEIPDNVKEGLEIKAVKSIDEILPLALTSMPKPLPKTPIVKPVEGSKAARH</sequence>